<evidence type="ECO:0000255" key="1">
    <source>
        <dbReference type="HAMAP-Rule" id="MF_01630"/>
    </source>
</evidence>
<dbReference type="EC" id="1.9.6.1" evidence="1"/>
<dbReference type="EMBL" id="CP000038">
    <property type="protein sequence ID" value="AAZ88911.1"/>
    <property type="molecule type" value="Genomic_DNA"/>
</dbReference>
<dbReference type="RefSeq" id="WP_000778067.1">
    <property type="nucleotide sequence ID" value="NC_007384.1"/>
</dbReference>
<dbReference type="SMR" id="Q3Z001"/>
<dbReference type="GeneID" id="93774972"/>
<dbReference type="KEGG" id="ssn:SSON_2264"/>
<dbReference type="HOGENOM" id="CLU_000422_13_4_6"/>
<dbReference type="Proteomes" id="UP000002529">
    <property type="component" value="Chromosome"/>
</dbReference>
<dbReference type="GO" id="GO:0016020">
    <property type="term" value="C:membrane"/>
    <property type="evidence" value="ECO:0007669"/>
    <property type="project" value="TreeGrafter"/>
</dbReference>
<dbReference type="GO" id="GO:0009325">
    <property type="term" value="C:nitrate reductase complex"/>
    <property type="evidence" value="ECO:0007669"/>
    <property type="project" value="TreeGrafter"/>
</dbReference>
<dbReference type="GO" id="GO:0042597">
    <property type="term" value="C:periplasmic space"/>
    <property type="evidence" value="ECO:0007669"/>
    <property type="project" value="UniProtKB-SubCell"/>
</dbReference>
<dbReference type="GO" id="GO:0051539">
    <property type="term" value="F:4 iron, 4 sulfur cluster binding"/>
    <property type="evidence" value="ECO:0007669"/>
    <property type="project" value="UniProtKB-KW"/>
</dbReference>
<dbReference type="GO" id="GO:0009055">
    <property type="term" value="F:electron transfer activity"/>
    <property type="evidence" value="ECO:0007669"/>
    <property type="project" value="UniProtKB-UniRule"/>
</dbReference>
<dbReference type="GO" id="GO:0005506">
    <property type="term" value="F:iron ion binding"/>
    <property type="evidence" value="ECO:0007669"/>
    <property type="project" value="UniProtKB-UniRule"/>
</dbReference>
<dbReference type="GO" id="GO:0030151">
    <property type="term" value="F:molybdenum ion binding"/>
    <property type="evidence" value="ECO:0007669"/>
    <property type="project" value="InterPro"/>
</dbReference>
<dbReference type="GO" id="GO:0043546">
    <property type="term" value="F:molybdopterin cofactor binding"/>
    <property type="evidence" value="ECO:0007669"/>
    <property type="project" value="InterPro"/>
</dbReference>
<dbReference type="GO" id="GO:0050140">
    <property type="term" value="F:nitrate reductase (cytochrome) activity"/>
    <property type="evidence" value="ECO:0007669"/>
    <property type="project" value="UniProtKB-EC"/>
</dbReference>
<dbReference type="GO" id="GO:0045333">
    <property type="term" value="P:cellular respiration"/>
    <property type="evidence" value="ECO:0007669"/>
    <property type="project" value="UniProtKB-ARBA"/>
</dbReference>
<dbReference type="GO" id="GO:0006777">
    <property type="term" value="P:Mo-molybdopterin cofactor biosynthetic process"/>
    <property type="evidence" value="ECO:0007669"/>
    <property type="project" value="UniProtKB-UniRule"/>
</dbReference>
<dbReference type="GO" id="GO:0042128">
    <property type="term" value="P:nitrate assimilation"/>
    <property type="evidence" value="ECO:0007669"/>
    <property type="project" value="UniProtKB-UniRule"/>
</dbReference>
<dbReference type="CDD" id="cd02791">
    <property type="entry name" value="MopB_CT_Nitrate-R-NapA-like"/>
    <property type="match status" value="1"/>
</dbReference>
<dbReference type="CDD" id="cd02754">
    <property type="entry name" value="MopB_Nitrate-R-NapA-like"/>
    <property type="match status" value="1"/>
</dbReference>
<dbReference type="FunFam" id="2.40.40.20:FF:000005">
    <property type="entry name" value="Periplasmic nitrate reductase"/>
    <property type="match status" value="1"/>
</dbReference>
<dbReference type="FunFam" id="3.40.228.10:FF:000001">
    <property type="entry name" value="Periplasmic nitrate reductase"/>
    <property type="match status" value="1"/>
</dbReference>
<dbReference type="Gene3D" id="2.40.40.20">
    <property type="match status" value="1"/>
</dbReference>
<dbReference type="Gene3D" id="3.30.200.210">
    <property type="match status" value="1"/>
</dbReference>
<dbReference type="Gene3D" id="3.40.50.740">
    <property type="match status" value="1"/>
</dbReference>
<dbReference type="Gene3D" id="3.40.228.10">
    <property type="entry name" value="Dimethylsulfoxide Reductase, domain 2"/>
    <property type="match status" value="1"/>
</dbReference>
<dbReference type="HAMAP" id="MF_01630">
    <property type="entry name" value="Nitrate_reduct_NapA"/>
    <property type="match status" value="1"/>
</dbReference>
<dbReference type="InterPro" id="IPR009010">
    <property type="entry name" value="Asp_de-COase-like_dom_sf"/>
</dbReference>
<dbReference type="InterPro" id="IPR041957">
    <property type="entry name" value="CT_Nitrate-R-NapA-like"/>
</dbReference>
<dbReference type="InterPro" id="IPR006657">
    <property type="entry name" value="MoPterin_dinucl-bd_dom"/>
</dbReference>
<dbReference type="InterPro" id="IPR006656">
    <property type="entry name" value="Mopterin_OxRdtase"/>
</dbReference>
<dbReference type="InterPro" id="IPR006963">
    <property type="entry name" value="Mopterin_OxRdtase_4Fe-4S_dom"/>
</dbReference>
<dbReference type="InterPro" id="IPR027467">
    <property type="entry name" value="MopterinOxRdtase_cofactor_BS"/>
</dbReference>
<dbReference type="InterPro" id="IPR010051">
    <property type="entry name" value="Periplasm_NO3_reductase_lsu"/>
</dbReference>
<dbReference type="InterPro" id="IPR050123">
    <property type="entry name" value="Prok_molybdopt-oxidoreductase"/>
</dbReference>
<dbReference type="InterPro" id="IPR006311">
    <property type="entry name" value="TAT_signal"/>
</dbReference>
<dbReference type="InterPro" id="IPR019546">
    <property type="entry name" value="TAT_signal_bac_arc"/>
</dbReference>
<dbReference type="NCBIfam" id="TIGR01706">
    <property type="entry name" value="NAPA"/>
    <property type="match status" value="1"/>
</dbReference>
<dbReference type="NCBIfam" id="NF010055">
    <property type="entry name" value="PRK13532.1"/>
    <property type="match status" value="1"/>
</dbReference>
<dbReference type="NCBIfam" id="TIGR01409">
    <property type="entry name" value="TAT_signal_seq"/>
    <property type="match status" value="1"/>
</dbReference>
<dbReference type="PANTHER" id="PTHR43105:SF11">
    <property type="entry name" value="PERIPLASMIC NITRATE REDUCTASE"/>
    <property type="match status" value="1"/>
</dbReference>
<dbReference type="PANTHER" id="PTHR43105">
    <property type="entry name" value="RESPIRATORY NITRATE REDUCTASE"/>
    <property type="match status" value="1"/>
</dbReference>
<dbReference type="Pfam" id="PF04879">
    <property type="entry name" value="Molybdop_Fe4S4"/>
    <property type="match status" value="1"/>
</dbReference>
<dbReference type="Pfam" id="PF00384">
    <property type="entry name" value="Molybdopterin"/>
    <property type="match status" value="1"/>
</dbReference>
<dbReference type="Pfam" id="PF01568">
    <property type="entry name" value="Molydop_binding"/>
    <property type="match status" value="1"/>
</dbReference>
<dbReference type="SMART" id="SM00926">
    <property type="entry name" value="Molybdop_Fe4S4"/>
    <property type="match status" value="1"/>
</dbReference>
<dbReference type="SUPFAM" id="SSF50692">
    <property type="entry name" value="ADC-like"/>
    <property type="match status" value="1"/>
</dbReference>
<dbReference type="SUPFAM" id="SSF53706">
    <property type="entry name" value="Formate dehydrogenase/DMSO reductase, domains 1-3"/>
    <property type="match status" value="1"/>
</dbReference>
<dbReference type="PROSITE" id="PS51669">
    <property type="entry name" value="4FE4S_MOW_BIS_MGD"/>
    <property type="match status" value="1"/>
</dbReference>
<dbReference type="PROSITE" id="PS00551">
    <property type="entry name" value="MOLYBDOPTERIN_PROK_1"/>
    <property type="match status" value="1"/>
</dbReference>
<dbReference type="PROSITE" id="PS51318">
    <property type="entry name" value="TAT"/>
    <property type="match status" value="1"/>
</dbReference>
<name>NAPA_SHISS</name>
<keyword id="KW-0004">4Fe-4S</keyword>
<keyword id="KW-0249">Electron transport</keyword>
<keyword id="KW-0408">Iron</keyword>
<keyword id="KW-0411">Iron-sulfur</keyword>
<keyword id="KW-0479">Metal-binding</keyword>
<keyword id="KW-0500">Molybdenum</keyword>
<keyword id="KW-0534">Nitrate assimilation</keyword>
<keyword id="KW-0560">Oxidoreductase</keyword>
<keyword id="KW-0574">Periplasm</keyword>
<keyword id="KW-1185">Reference proteome</keyword>
<keyword id="KW-0732">Signal</keyword>
<keyword id="KW-0813">Transport</keyword>
<feature type="signal peptide" description="Tat-type signal" evidence="1">
    <location>
        <begin position="1"/>
        <end position="31"/>
    </location>
</feature>
<feature type="chain" id="PRO_0000046007" description="Periplasmic nitrate reductase" evidence="1">
    <location>
        <begin position="32"/>
        <end position="828"/>
    </location>
</feature>
<feature type="domain" description="4Fe-4S Mo/W bis-MGD-type" evidence="1">
    <location>
        <begin position="39"/>
        <end position="95"/>
    </location>
</feature>
<feature type="binding site" evidence="1">
    <location>
        <position position="46"/>
    </location>
    <ligand>
        <name>[4Fe-4S] cluster</name>
        <dbReference type="ChEBI" id="CHEBI:49883"/>
    </ligand>
</feature>
<feature type="binding site" evidence="1">
    <location>
        <position position="49"/>
    </location>
    <ligand>
        <name>[4Fe-4S] cluster</name>
        <dbReference type="ChEBI" id="CHEBI:49883"/>
    </ligand>
</feature>
<feature type="binding site" evidence="1">
    <location>
        <position position="53"/>
    </location>
    <ligand>
        <name>[4Fe-4S] cluster</name>
        <dbReference type="ChEBI" id="CHEBI:49883"/>
    </ligand>
</feature>
<feature type="binding site" evidence="1">
    <location>
        <position position="81"/>
    </location>
    <ligand>
        <name>[4Fe-4S] cluster</name>
        <dbReference type="ChEBI" id="CHEBI:49883"/>
    </ligand>
</feature>
<feature type="binding site" evidence="1">
    <location>
        <position position="83"/>
    </location>
    <ligand>
        <name>Mo-bis(molybdopterin guanine dinucleotide)</name>
        <dbReference type="ChEBI" id="CHEBI:60539"/>
    </ligand>
</feature>
<feature type="binding site" evidence="1">
    <location>
        <position position="150"/>
    </location>
    <ligand>
        <name>Mo-bis(molybdopterin guanine dinucleotide)</name>
        <dbReference type="ChEBI" id="CHEBI:60539"/>
    </ligand>
</feature>
<feature type="binding site" evidence="1">
    <location>
        <position position="175"/>
    </location>
    <ligand>
        <name>Mo-bis(molybdopterin guanine dinucleotide)</name>
        <dbReference type="ChEBI" id="CHEBI:60539"/>
    </ligand>
</feature>
<feature type="binding site" evidence="1">
    <location>
        <position position="179"/>
    </location>
    <ligand>
        <name>Mo-bis(molybdopterin guanine dinucleotide)</name>
        <dbReference type="ChEBI" id="CHEBI:60539"/>
    </ligand>
</feature>
<feature type="binding site" evidence="1">
    <location>
        <begin position="212"/>
        <end position="219"/>
    </location>
    <ligand>
        <name>Mo-bis(molybdopterin guanine dinucleotide)</name>
        <dbReference type="ChEBI" id="CHEBI:60539"/>
    </ligand>
</feature>
<feature type="binding site" evidence="1">
    <location>
        <begin position="243"/>
        <end position="247"/>
    </location>
    <ligand>
        <name>Mo-bis(molybdopterin guanine dinucleotide)</name>
        <dbReference type="ChEBI" id="CHEBI:60539"/>
    </ligand>
</feature>
<feature type="binding site" evidence="1">
    <location>
        <begin position="262"/>
        <end position="264"/>
    </location>
    <ligand>
        <name>Mo-bis(molybdopterin guanine dinucleotide)</name>
        <dbReference type="ChEBI" id="CHEBI:60539"/>
    </ligand>
</feature>
<feature type="binding site" evidence="1">
    <location>
        <position position="372"/>
    </location>
    <ligand>
        <name>Mo-bis(molybdopterin guanine dinucleotide)</name>
        <dbReference type="ChEBI" id="CHEBI:60539"/>
    </ligand>
</feature>
<feature type="binding site" evidence="1">
    <location>
        <position position="376"/>
    </location>
    <ligand>
        <name>Mo-bis(molybdopterin guanine dinucleotide)</name>
        <dbReference type="ChEBI" id="CHEBI:60539"/>
    </ligand>
</feature>
<feature type="binding site" evidence="1">
    <location>
        <position position="482"/>
    </location>
    <ligand>
        <name>Mo-bis(molybdopterin guanine dinucleotide)</name>
        <dbReference type="ChEBI" id="CHEBI:60539"/>
    </ligand>
</feature>
<feature type="binding site" evidence="1">
    <location>
        <begin position="508"/>
        <end position="509"/>
    </location>
    <ligand>
        <name>Mo-bis(molybdopterin guanine dinucleotide)</name>
        <dbReference type="ChEBI" id="CHEBI:60539"/>
    </ligand>
</feature>
<feature type="binding site" evidence="1">
    <location>
        <position position="531"/>
    </location>
    <ligand>
        <name>Mo-bis(molybdopterin guanine dinucleotide)</name>
        <dbReference type="ChEBI" id="CHEBI:60539"/>
    </ligand>
</feature>
<feature type="binding site" evidence="1">
    <location>
        <position position="558"/>
    </location>
    <ligand>
        <name>Mo-bis(molybdopterin guanine dinucleotide)</name>
        <dbReference type="ChEBI" id="CHEBI:60539"/>
    </ligand>
</feature>
<feature type="binding site" evidence="1">
    <location>
        <begin position="718"/>
        <end position="727"/>
    </location>
    <ligand>
        <name>Mo-bis(molybdopterin guanine dinucleotide)</name>
        <dbReference type="ChEBI" id="CHEBI:60539"/>
    </ligand>
</feature>
<feature type="binding site" evidence="1">
    <location>
        <position position="794"/>
    </location>
    <ligand>
        <name>substrate</name>
    </ligand>
</feature>
<feature type="binding site" evidence="1">
    <location>
        <position position="802"/>
    </location>
    <ligand>
        <name>Mo-bis(molybdopterin guanine dinucleotide)</name>
        <dbReference type="ChEBI" id="CHEBI:60539"/>
    </ligand>
</feature>
<feature type="binding site" evidence="1">
    <location>
        <position position="819"/>
    </location>
    <ligand>
        <name>Mo-bis(molybdopterin guanine dinucleotide)</name>
        <dbReference type="ChEBI" id="CHEBI:60539"/>
    </ligand>
</feature>
<organism>
    <name type="scientific">Shigella sonnei (strain Ss046)</name>
    <dbReference type="NCBI Taxonomy" id="300269"/>
    <lineage>
        <taxon>Bacteria</taxon>
        <taxon>Pseudomonadati</taxon>
        <taxon>Pseudomonadota</taxon>
        <taxon>Gammaproteobacteria</taxon>
        <taxon>Enterobacterales</taxon>
        <taxon>Enterobacteriaceae</taxon>
        <taxon>Shigella</taxon>
    </lineage>
</organism>
<comment type="function">
    <text evidence="1">Catalytic subunit of the periplasmic nitrate reductase complex NapAB. Receives electrons from NapB and catalyzes the reduction of nitrate to nitrite.</text>
</comment>
<comment type="catalytic activity">
    <reaction evidence="1">
        <text>2 Fe(II)-[cytochrome] + nitrate + 2 H(+) = 2 Fe(III)-[cytochrome] + nitrite + H2O</text>
        <dbReference type="Rhea" id="RHEA:12909"/>
        <dbReference type="Rhea" id="RHEA-COMP:11777"/>
        <dbReference type="Rhea" id="RHEA-COMP:11778"/>
        <dbReference type="ChEBI" id="CHEBI:15377"/>
        <dbReference type="ChEBI" id="CHEBI:15378"/>
        <dbReference type="ChEBI" id="CHEBI:16301"/>
        <dbReference type="ChEBI" id="CHEBI:17632"/>
        <dbReference type="ChEBI" id="CHEBI:29033"/>
        <dbReference type="ChEBI" id="CHEBI:29034"/>
        <dbReference type="EC" id="1.9.6.1"/>
    </reaction>
</comment>
<comment type="cofactor">
    <cofactor evidence="1">
        <name>[4Fe-4S] cluster</name>
        <dbReference type="ChEBI" id="CHEBI:49883"/>
    </cofactor>
    <text evidence="1">Binds 1 [4Fe-4S] cluster.</text>
</comment>
<comment type="cofactor">
    <cofactor evidence="1">
        <name>Mo-bis(molybdopterin guanine dinucleotide)</name>
        <dbReference type="ChEBI" id="CHEBI:60539"/>
    </cofactor>
    <text evidence="1">Binds 1 molybdenum-bis(molybdopterin guanine dinucleotide) (Mo-bis-MGD) cofactor per subunit.</text>
</comment>
<comment type="subunit">
    <text evidence="1">Component of the periplasmic nitrate reductase NapAB complex composed of NapA and NapB.</text>
</comment>
<comment type="subcellular location">
    <subcellularLocation>
        <location evidence="1">Periplasm</location>
    </subcellularLocation>
</comment>
<comment type="PTM">
    <text evidence="1">Predicted to be exported by the Tat system. The position of the signal peptide cleavage has not been experimentally proven.</text>
</comment>
<comment type="similarity">
    <text evidence="1">Belongs to the prokaryotic molybdopterin-containing oxidoreductase family. NasA/NapA/NarB subfamily.</text>
</comment>
<protein>
    <recommendedName>
        <fullName evidence="1">Periplasmic nitrate reductase</fullName>
        <ecNumber evidence="1">1.9.6.1</ecNumber>
    </recommendedName>
</protein>
<gene>
    <name evidence="1" type="primary">napA</name>
    <name type="ordered locus">SSON_2264</name>
</gene>
<sequence>MKLSRRSFMKANAVAAAAAAAGLSVPGVARAVVGQQEAIKWDKAPCRFCGTGCGVLVGTQQGRVVACQGDPDAPVNRGLNCIKGYFLPKIMYGKDRLTQPLLRMKNGKYDKEGEFTPITWDQAFDVMEEKFKTALKEKGPESIGMFGSGQWTIWEGYAASKLFKAGFRSNNIDPNARHCMASAVVGFMRTFGMDEPMGCYDDIEQADAFVLWGANMAEMHPILWSRITNRRLSNQNVTVAVLSTYQHRSFELADNGIIFTPQSDLVILNYIANYIIQNNAINQDFFSKHVNLRKGATDIGYGLRPTHPLEKAAKNPGSDASEPMSFEDYKAFVAEYTLEKTAEMTGVPKDQLEQLAQLYADPNKKVISYWTMGFNQHTRGVWANNLVYNLHLLTGKISQPGCGPFSLTGQPSACGTAREVGTFAHRLPADMVVTNEKHRDICEKKWNIPSGTIPAKIGLHAVAQDRALKDGKLNVYWTMCTNNMQAGPNINEERMPGWRDPRNFIIVSDPYPTVSALAADLILPTAMWVEKEGAYGNAERRTQFWRQQVQAPGEAKSDLWQLVQFSRRFKTEEVWPEELLAKKPELRGKTLYEVLYATPEVSKFPVSELAEDQLNDESRELGFYLQKGLFEEYAWFGRGHGHDLAPFDDYHKARGLRWPVVNGKETQWRYSEGNDPYVKAGEGYKFYGKPDGKAVIFALPFEPAAEAPDEEYDLWLSTGRVLEHWHTGSMTRRVPELHRAFPEAVLFIHPLDAKARDLRRGDKVKVVSRRGEVISIVETRGRNRPPQGLVYMPFFDAAQLVNKLTLDATDPLSKETDFKKCAVKLEKV</sequence>
<proteinExistence type="inferred from homology"/>
<accession>Q3Z001</accession>
<reference key="1">
    <citation type="journal article" date="2005" name="Nucleic Acids Res.">
        <title>Genome dynamics and diversity of Shigella species, the etiologic agents of bacillary dysentery.</title>
        <authorList>
            <person name="Yang F."/>
            <person name="Yang J."/>
            <person name="Zhang X."/>
            <person name="Chen L."/>
            <person name="Jiang Y."/>
            <person name="Yan Y."/>
            <person name="Tang X."/>
            <person name="Wang J."/>
            <person name="Xiong Z."/>
            <person name="Dong J."/>
            <person name="Xue Y."/>
            <person name="Zhu Y."/>
            <person name="Xu X."/>
            <person name="Sun L."/>
            <person name="Chen S."/>
            <person name="Nie H."/>
            <person name="Peng J."/>
            <person name="Xu J."/>
            <person name="Wang Y."/>
            <person name="Yuan Z."/>
            <person name="Wen Y."/>
            <person name="Yao Z."/>
            <person name="Shen Y."/>
            <person name="Qiang B."/>
            <person name="Hou Y."/>
            <person name="Yu J."/>
            <person name="Jin Q."/>
        </authorList>
    </citation>
    <scope>NUCLEOTIDE SEQUENCE [LARGE SCALE GENOMIC DNA]</scope>
    <source>
        <strain>Ss046</strain>
    </source>
</reference>